<protein>
    <recommendedName>
        <fullName evidence="1">Biotin synthase</fullName>
        <ecNumber evidence="1">2.8.1.6</ecNumber>
    </recommendedName>
</protein>
<accession>B0U0S3</accession>
<sequence length="313" mass="34941">MTLEQIKEIYSRPLTELILQALEIHNKNFGNDIELCSLKSIKTGTCPEDCKYCPQSGHYNTSIEKHKLLDKDSILAEAKNAKDAGSKRFCMGAAWKHIPKKDFDQVAEIITEVKNLGLETCVTLGSINAEEATKLKEAGLDYYNHNLDTSREFYPEIITTRKFEERIETIRNVANADINVCCGGILGMGESLDDRFNLLLELLQLPAAPKSIPINTLIPVKGTPLGDKYTDAQIDSFELVRFIATTRILFPQARLRLSAGRENMSLETQTLCFLAGINSIFYGNKLLTENNATINSDNFLLAKLGLESNVELC</sequence>
<dbReference type="EC" id="2.8.1.6" evidence="1"/>
<dbReference type="EMBL" id="CP000937">
    <property type="protein sequence ID" value="ABZ88026.1"/>
    <property type="molecule type" value="Genomic_DNA"/>
</dbReference>
<dbReference type="SMR" id="B0U0S3"/>
<dbReference type="KEGG" id="fph:Fphi_1799"/>
<dbReference type="eggNOG" id="COG0502">
    <property type="taxonomic scope" value="Bacteria"/>
</dbReference>
<dbReference type="HOGENOM" id="CLU_033172_1_2_6"/>
<dbReference type="UniPathway" id="UPA00078">
    <property type="reaction ID" value="UER00162"/>
</dbReference>
<dbReference type="GO" id="GO:0051537">
    <property type="term" value="F:2 iron, 2 sulfur cluster binding"/>
    <property type="evidence" value="ECO:0007669"/>
    <property type="project" value="UniProtKB-KW"/>
</dbReference>
<dbReference type="GO" id="GO:0051539">
    <property type="term" value="F:4 iron, 4 sulfur cluster binding"/>
    <property type="evidence" value="ECO:0007669"/>
    <property type="project" value="UniProtKB-KW"/>
</dbReference>
<dbReference type="GO" id="GO:0004076">
    <property type="term" value="F:biotin synthase activity"/>
    <property type="evidence" value="ECO:0007669"/>
    <property type="project" value="UniProtKB-UniRule"/>
</dbReference>
<dbReference type="GO" id="GO:0005506">
    <property type="term" value="F:iron ion binding"/>
    <property type="evidence" value="ECO:0007669"/>
    <property type="project" value="UniProtKB-UniRule"/>
</dbReference>
<dbReference type="GO" id="GO:0009102">
    <property type="term" value="P:biotin biosynthetic process"/>
    <property type="evidence" value="ECO:0007669"/>
    <property type="project" value="UniProtKB-UniRule"/>
</dbReference>
<dbReference type="CDD" id="cd01335">
    <property type="entry name" value="Radical_SAM"/>
    <property type="match status" value="1"/>
</dbReference>
<dbReference type="Gene3D" id="3.20.20.70">
    <property type="entry name" value="Aldolase class I"/>
    <property type="match status" value="1"/>
</dbReference>
<dbReference type="HAMAP" id="MF_01694">
    <property type="entry name" value="BioB"/>
    <property type="match status" value="1"/>
</dbReference>
<dbReference type="InterPro" id="IPR013785">
    <property type="entry name" value="Aldolase_TIM"/>
</dbReference>
<dbReference type="InterPro" id="IPR010722">
    <property type="entry name" value="BATS_dom"/>
</dbReference>
<dbReference type="InterPro" id="IPR002684">
    <property type="entry name" value="Biotin_synth/BioAB"/>
</dbReference>
<dbReference type="InterPro" id="IPR024177">
    <property type="entry name" value="Biotin_synthase"/>
</dbReference>
<dbReference type="InterPro" id="IPR006638">
    <property type="entry name" value="Elp3/MiaA/NifB-like_rSAM"/>
</dbReference>
<dbReference type="InterPro" id="IPR007197">
    <property type="entry name" value="rSAM"/>
</dbReference>
<dbReference type="NCBIfam" id="TIGR00433">
    <property type="entry name" value="bioB"/>
    <property type="match status" value="1"/>
</dbReference>
<dbReference type="PANTHER" id="PTHR22976">
    <property type="entry name" value="BIOTIN SYNTHASE"/>
    <property type="match status" value="1"/>
</dbReference>
<dbReference type="PANTHER" id="PTHR22976:SF2">
    <property type="entry name" value="BIOTIN SYNTHASE, MITOCHONDRIAL"/>
    <property type="match status" value="1"/>
</dbReference>
<dbReference type="Pfam" id="PF06968">
    <property type="entry name" value="BATS"/>
    <property type="match status" value="1"/>
</dbReference>
<dbReference type="Pfam" id="PF04055">
    <property type="entry name" value="Radical_SAM"/>
    <property type="match status" value="1"/>
</dbReference>
<dbReference type="PIRSF" id="PIRSF001619">
    <property type="entry name" value="Biotin_synth"/>
    <property type="match status" value="1"/>
</dbReference>
<dbReference type="SFLD" id="SFLDF00272">
    <property type="entry name" value="biotin_synthase"/>
    <property type="match status" value="1"/>
</dbReference>
<dbReference type="SFLD" id="SFLDS00029">
    <property type="entry name" value="Radical_SAM"/>
    <property type="match status" value="1"/>
</dbReference>
<dbReference type="SMART" id="SM00876">
    <property type="entry name" value="BATS"/>
    <property type="match status" value="1"/>
</dbReference>
<dbReference type="SMART" id="SM00729">
    <property type="entry name" value="Elp3"/>
    <property type="match status" value="1"/>
</dbReference>
<dbReference type="SUPFAM" id="SSF102114">
    <property type="entry name" value="Radical SAM enzymes"/>
    <property type="match status" value="1"/>
</dbReference>
<dbReference type="PROSITE" id="PS51918">
    <property type="entry name" value="RADICAL_SAM"/>
    <property type="match status" value="1"/>
</dbReference>
<feature type="chain" id="PRO_0000381387" description="Biotin synthase">
    <location>
        <begin position="1"/>
        <end position="313"/>
    </location>
</feature>
<feature type="domain" description="Radical SAM core" evidence="2">
    <location>
        <begin position="28"/>
        <end position="258"/>
    </location>
</feature>
<feature type="binding site" evidence="1">
    <location>
        <position position="46"/>
    </location>
    <ligand>
        <name>[4Fe-4S] cluster</name>
        <dbReference type="ChEBI" id="CHEBI:49883"/>
        <note>4Fe-4S-S-AdoMet</note>
    </ligand>
</feature>
<feature type="binding site" evidence="1">
    <location>
        <position position="50"/>
    </location>
    <ligand>
        <name>[4Fe-4S] cluster</name>
        <dbReference type="ChEBI" id="CHEBI:49883"/>
        <note>4Fe-4S-S-AdoMet</note>
    </ligand>
</feature>
<feature type="binding site" evidence="1">
    <location>
        <position position="53"/>
    </location>
    <ligand>
        <name>[4Fe-4S] cluster</name>
        <dbReference type="ChEBI" id="CHEBI:49883"/>
        <note>4Fe-4S-S-AdoMet</note>
    </ligand>
</feature>
<feature type="binding site" evidence="1">
    <location>
        <position position="90"/>
    </location>
    <ligand>
        <name>[2Fe-2S] cluster</name>
        <dbReference type="ChEBI" id="CHEBI:190135"/>
    </ligand>
</feature>
<feature type="binding site" evidence="1">
    <location>
        <position position="121"/>
    </location>
    <ligand>
        <name>[2Fe-2S] cluster</name>
        <dbReference type="ChEBI" id="CHEBI:190135"/>
    </ligand>
</feature>
<feature type="binding site" evidence="1">
    <location>
        <position position="181"/>
    </location>
    <ligand>
        <name>[2Fe-2S] cluster</name>
        <dbReference type="ChEBI" id="CHEBI:190135"/>
    </ligand>
</feature>
<feature type="binding site" evidence="1">
    <location>
        <position position="256"/>
    </location>
    <ligand>
        <name>[2Fe-2S] cluster</name>
        <dbReference type="ChEBI" id="CHEBI:190135"/>
    </ligand>
</feature>
<keyword id="KW-0001">2Fe-2S</keyword>
<keyword id="KW-0004">4Fe-4S</keyword>
<keyword id="KW-0093">Biotin biosynthesis</keyword>
<keyword id="KW-0408">Iron</keyword>
<keyword id="KW-0411">Iron-sulfur</keyword>
<keyword id="KW-0479">Metal-binding</keyword>
<keyword id="KW-0949">S-adenosyl-L-methionine</keyword>
<keyword id="KW-0808">Transferase</keyword>
<name>BIOB_FRAP2</name>
<reference key="1">
    <citation type="submission" date="2007-12" db="EMBL/GenBank/DDBJ databases">
        <title>Complete sequence of chromosome of Francisella philomiragia subsp. philomiragia ATCC 25017.</title>
        <authorList>
            <consortium name="US DOE Joint Genome Institute"/>
            <person name="Copeland A."/>
            <person name="Lucas S."/>
            <person name="Lapidus A."/>
            <person name="Barry K."/>
            <person name="Detter J.C."/>
            <person name="Glavina del Rio T."/>
            <person name="Hammon N."/>
            <person name="Israni S."/>
            <person name="Dalin E."/>
            <person name="Tice H."/>
            <person name="Pitluck S."/>
            <person name="Chain P."/>
            <person name="Malfatti S."/>
            <person name="Shin M."/>
            <person name="Vergez L."/>
            <person name="Schmutz J."/>
            <person name="Larimer F."/>
            <person name="Land M."/>
            <person name="Hauser L."/>
            <person name="Richardson P."/>
        </authorList>
    </citation>
    <scope>NUCLEOTIDE SEQUENCE [LARGE SCALE GENOMIC DNA]</scope>
    <source>
        <strain>ATCC 25017 / CCUG 19701 / FSC 153 / O#319-036</strain>
    </source>
</reference>
<evidence type="ECO:0000255" key="1">
    <source>
        <dbReference type="HAMAP-Rule" id="MF_01694"/>
    </source>
</evidence>
<evidence type="ECO:0000255" key="2">
    <source>
        <dbReference type="PROSITE-ProRule" id="PRU01266"/>
    </source>
</evidence>
<organism>
    <name type="scientific">Francisella philomiragia subsp. philomiragia (strain ATCC 25017 / CCUG 19701 / FSC 153 / O#319-036)</name>
    <dbReference type="NCBI Taxonomy" id="484022"/>
    <lineage>
        <taxon>Bacteria</taxon>
        <taxon>Pseudomonadati</taxon>
        <taxon>Pseudomonadota</taxon>
        <taxon>Gammaproteobacteria</taxon>
        <taxon>Thiotrichales</taxon>
        <taxon>Francisellaceae</taxon>
        <taxon>Francisella</taxon>
    </lineage>
</organism>
<gene>
    <name evidence="1" type="primary">bioB</name>
    <name type="ordered locus">Fphi_1799</name>
</gene>
<proteinExistence type="inferred from homology"/>
<comment type="function">
    <text evidence="1">Catalyzes the conversion of dethiobiotin (DTB) to biotin by the insertion of a sulfur atom into dethiobiotin via a radical-based mechanism.</text>
</comment>
<comment type="catalytic activity">
    <reaction evidence="1">
        <text>(4R,5S)-dethiobiotin + (sulfur carrier)-SH + 2 reduced [2Fe-2S]-[ferredoxin] + 2 S-adenosyl-L-methionine = (sulfur carrier)-H + biotin + 2 5'-deoxyadenosine + 2 L-methionine + 2 oxidized [2Fe-2S]-[ferredoxin]</text>
        <dbReference type="Rhea" id="RHEA:22060"/>
        <dbReference type="Rhea" id="RHEA-COMP:10000"/>
        <dbReference type="Rhea" id="RHEA-COMP:10001"/>
        <dbReference type="Rhea" id="RHEA-COMP:14737"/>
        <dbReference type="Rhea" id="RHEA-COMP:14739"/>
        <dbReference type="ChEBI" id="CHEBI:17319"/>
        <dbReference type="ChEBI" id="CHEBI:29917"/>
        <dbReference type="ChEBI" id="CHEBI:33737"/>
        <dbReference type="ChEBI" id="CHEBI:33738"/>
        <dbReference type="ChEBI" id="CHEBI:57586"/>
        <dbReference type="ChEBI" id="CHEBI:57844"/>
        <dbReference type="ChEBI" id="CHEBI:59789"/>
        <dbReference type="ChEBI" id="CHEBI:64428"/>
        <dbReference type="ChEBI" id="CHEBI:149473"/>
        <dbReference type="EC" id="2.8.1.6"/>
    </reaction>
</comment>
<comment type="cofactor">
    <cofactor evidence="1">
        <name>[4Fe-4S] cluster</name>
        <dbReference type="ChEBI" id="CHEBI:49883"/>
    </cofactor>
    <text evidence="1">Binds 1 [4Fe-4S] cluster. The cluster is coordinated with 3 cysteines and an exchangeable S-adenosyl-L-methionine.</text>
</comment>
<comment type="cofactor">
    <cofactor evidence="1">
        <name>[2Fe-2S] cluster</name>
        <dbReference type="ChEBI" id="CHEBI:190135"/>
    </cofactor>
    <text evidence="1">Binds 1 [2Fe-2S] cluster. The cluster is coordinated with 3 cysteines and 1 arginine.</text>
</comment>
<comment type="pathway">
    <text evidence="1">Cofactor biosynthesis; biotin biosynthesis; biotin from 7,8-diaminononanoate: step 2/2.</text>
</comment>
<comment type="subunit">
    <text evidence="1">Homodimer.</text>
</comment>
<comment type="similarity">
    <text evidence="1">Belongs to the radical SAM superfamily. Biotin synthase family.</text>
</comment>